<protein>
    <recommendedName>
        <fullName evidence="1">Endonuclease 8</fullName>
    </recommendedName>
    <alternativeName>
        <fullName evidence="1">DNA glycosylase/AP lyase Nei</fullName>
        <ecNumber evidence="1">3.2.2.-</ecNumber>
        <ecNumber evidence="1">4.2.99.18</ecNumber>
    </alternativeName>
    <alternativeName>
        <fullName evidence="1">DNA-(apurinic or apyrimidinic site) lyase Nei</fullName>
    </alternativeName>
    <alternativeName>
        <fullName evidence="1">Endonuclease VIII</fullName>
    </alternativeName>
</protein>
<dbReference type="EC" id="3.2.2.-" evidence="1"/>
<dbReference type="EC" id="4.2.99.18" evidence="1"/>
<dbReference type="EMBL" id="AP009240">
    <property type="protein sequence ID" value="BAG76297.1"/>
    <property type="molecule type" value="Genomic_DNA"/>
</dbReference>
<dbReference type="RefSeq" id="WP_001114025.1">
    <property type="nucleotide sequence ID" value="NC_011415.1"/>
</dbReference>
<dbReference type="SMR" id="B6I7Y5"/>
<dbReference type="GeneID" id="75205546"/>
<dbReference type="KEGG" id="ecy:ECSE_0773"/>
<dbReference type="HOGENOM" id="CLU_038423_2_2_6"/>
<dbReference type="Proteomes" id="UP000008199">
    <property type="component" value="Chromosome"/>
</dbReference>
<dbReference type="GO" id="GO:0140078">
    <property type="term" value="F:class I DNA-(apurinic or apyrimidinic site) endonuclease activity"/>
    <property type="evidence" value="ECO:0007669"/>
    <property type="project" value="UniProtKB-EC"/>
</dbReference>
<dbReference type="GO" id="GO:0003684">
    <property type="term" value="F:damaged DNA binding"/>
    <property type="evidence" value="ECO:0007669"/>
    <property type="project" value="InterPro"/>
</dbReference>
<dbReference type="GO" id="GO:0000703">
    <property type="term" value="F:oxidized pyrimidine nucleobase lesion DNA N-glycosylase activity"/>
    <property type="evidence" value="ECO:0007669"/>
    <property type="project" value="UniProtKB-UniRule"/>
</dbReference>
<dbReference type="GO" id="GO:0008270">
    <property type="term" value="F:zinc ion binding"/>
    <property type="evidence" value="ECO:0007669"/>
    <property type="project" value="UniProtKB-UniRule"/>
</dbReference>
<dbReference type="GO" id="GO:0006284">
    <property type="term" value="P:base-excision repair"/>
    <property type="evidence" value="ECO:0007669"/>
    <property type="project" value="InterPro"/>
</dbReference>
<dbReference type="CDD" id="cd08965">
    <property type="entry name" value="EcNei-like_N"/>
    <property type="match status" value="1"/>
</dbReference>
<dbReference type="FunFam" id="1.10.8.50:FF:000005">
    <property type="entry name" value="Endonuclease 8"/>
    <property type="match status" value="1"/>
</dbReference>
<dbReference type="FunFam" id="3.20.190.10:FF:000002">
    <property type="entry name" value="Endonuclease 8"/>
    <property type="match status" value="1"/>
</dbReference>
<dbReference type="Gene3D" id="1.10.8.50">
    <property type="match status" value="1"/>
</dbReference>
<dbReference type="Gene3D" id="3.20.190.10">
    <property type="entry name" value="MutM-like, N-terminal"/>
    <property type="match status" value="1"/>
</dbReference>
<dbReference type="HAMAP" id="MF_01253">
    <property type="entry name" value="Endonuclease_8"/>
    <property type="match status" value="1"/>
</dbReference>
<dbReference type="InterPro" id="IPR015886">
    <property type="entry name" value="DNA_glyclase/AP_lyase_DNA-bd"/>
</dbReference>
<dbReference type="InterPro" id="IPR015887">
    <property type="entry name" value="DNA_glyclase_Znf_dom_DNA_BS"/>
</dbReference>
<dbReference type="InterPro" id="IPR044091">
    <property type="entry name" value="EcNei-like_N"/>
</dbReference>
<dbReference type="InterPro" id="IPR023713">
    <property type="entry name" value="Endonuclease-VIII"/>
</dbReference>
<dbReference type="InterPro" id="IPR012319">
    <property type="entry name" value="FPG_cat"/>
</dbReference>
<dbReference type="InterPro" id="IPR035937">
    <property type="entry name" value="MutM-like_N-ter"/>
</dbReference>
<dbReference type="InterPro" id="IPR010979">
    <property type="entry name" value="Ribosomal_uS13-like_H2TH"/>
</dbReference>
<dbReference type="InterPro" id="IPR000214">
    <property type="entry name" value="Znf_DNA_glyclase/AP_lyase"/>
</dbReference>
<dbReference type="InterPro" id="IPR010663">
    <property type="entry name" value="Znf_FPG/IleRS"/>
</dbReference>
<dbReference type="NCBIfam" id="NF007763">
    <property type="entry name" value="PRK10445.1"/>
    <property type="match status" value="1"/>
</dbReference>
<dbReference type="PANTHER" id="PTHR42697">
    <property type="entry name" value="ENDONUCLEASE 8"/>
    <property type="match status" value="1"/>
</dbReference>
<dbReference type="PANTHER" id="PTHR42697:SF1">
    <property type="entry name" value="ENDONUCLEASE 8"/>
    <property type="match status" value="1"/>
</dbReference>
<dbReference type="Pfam" id="PF01149">
    <property type="entry name" value="Fapy_DNA_glyco"/>
    <property type="match status" value="1"/>
</dbReference>
<dbReference type="Pfam" id="PF06831">
    <property type="entry name" value="H2TH"/>
    <property type="match status" value="1"/>
</dbReference>
<dbReference type="Pfam" id="PF06827">
    <property type="entry name" value="zf-FPG_IleRS"/>
    <property type="match status" value="1"/>
</dbReference>
<dbReference type="SMART" id="SM00898">
    <property type="entry name" value="Fapy_DNA_glyco"/>
    <property type="match status" value="1"/>
</dbReference>
<dbReference type="SMART" id="SM01232">
    <property type="entry name" value="H2TH"/>
    <property type="match status" value="1"/>
</dbReference>
<dbReference type="SUPFAM" id="SSF57716">
    <property type="entry name" value="Glucocorticoid receptor-like (DNA-binding domain)"/>
    <property type="match status" value="1"/>
</dbReference>
<dbReference type="SUPFAM" id="SSF81624">
    <property type="entry name" value="N-terminal domain of MutM-like DNA repair proteins"/>
    <property type="match status" value="1"/>
</dbReference>
<dbReference type="SUPFAM" id="SSF46946">
    <property type="entry name" value="S13-like H2TH domain"/>
    <property type="match status" value="1"/>
</dbReference>
<dbReference type="PROSITE" id="PS51068">
    <property type="entry name" value="FPG_CAT"/>
    <property type="match status" value="1"/>
</dbReference>
<dbReference type="PROSITE" id="PS01242">
    <property type="entry name" value="ZF_FPG_1"/>
    <property type="match status" value="1"/>
</dbReference>
<dbReference type="PROSITE" id="PS51066">
    <property type="entry name" value="ZF_FPG_2"/>
    <property type="match status" value="1"/>
</dbReference>
<organism>
    <name type="scientific">Escherichia coli (strain SE11)</name>
    <dbReference type="NCBI Taxonomy" id="409438"/>
    <lineage>
        <taxon>Bacteria</taxon>
        <taxon>Pseudomonadati</taxon>
        <taxon>Pseudomonadota</taxon>
        <taxon>Gammaproteobacteria</taxon>
        <taxon>Enterobacterales</taxon>
        <taxon>Enterobacteriaceae</taxon>
        <taxon>Escherichia</taxon>
    </lineage>
</organism>
<name>END8_ECOSE</name>
<reference key="1">
    <citation type="journal article" date="2008" name="DNA Res.">
        <title>Complete genome sequence and comparative analysis of the wild-type commensal Escherichia coli strain SE11 isolated from a healthy adult.</title>
        <authorList>
            <person name="Oshima K."/>
            <person name="Toh H."/>
            <person name="Ogura Y."/>
            <person name="Sasamoto H."/>
            <person name="Morita H."/>
            <person name="Park S.-H."/>
            <person name="Ooka T."/>
            <person name="Iyoda S."/>
            <person name="Taylor T.D."/>
            <person name="Hayashi T."/>
            <person name="Itoh K."/>
            <person name="Hattori M."/>
        </authorList>
    </citation>
    <scope>NUCLEOTIDE SEQUENCE [LARGE SCALE GENOMIC DNA]</scope>
    <source>
        <strain>SE11</strain>
    </source>
</reference>
<sequence length="263" mass="29890">MPEGPEIRRAADNLEAAIKGKPLTDVWFAFPQLKTYQSQLIGQHVTHVETRGKALLTHFSNDLTLYSHNQLYGVWRVVDTGEEPQTTRVLRVKLQTADKTILLYSASDIEMLRPEQLTTHPFLQRVGPDVLDPNLTPEVVKERLLSPRFRNRQFAGLLLDQAFLAGLGNYLRVEILWQVGLTGNHKAKDLNAAQLDALAHALLEIPRFSYATRGQVDENKHHGALFRFKVFHRDGELCERCGGIIEKTTLSSRPFYWCPGCQH</sequence>
<comment type="function">
    <text evidence="1">Involved in base excision repair of DNA damaged by oxidation or by mutagenic agents. Acts as a DNA glycosylase that recognizes and removes damaged bases. Has a preference for oxidized pyrimidines, such as thymine glycol, 5,6-dihydrouracil and 5,6-dihydrothymine. Has AP (apurinic/apyrimidinic) lyase activity and introduces nicks in the DNA strand. Cleaves the DNA backbone by beta-delta elimination to generate a single-strand break at the site of the removed base with both 3'- and 5'-phosphates.</text>
</comment>
<comment type="catalytic activity">
    <reaction evidence="1">
        <text>2'-deoxyribonucleotide-(2'-deoxyribose 5'-phosphate)-2'-deoxyribonucleotide-DNA = a 3'-end 2'-deoxyribonucleotide-(2,3-dehydro-2,3-deoxyribose 5'-phosphate)-DNA + a 5'-end 5'-phospho-2'-deoxyribonucleoside-DNA + H(+)</text>
        <dbReference type="Rhea" id="RHEA:66592"/>
        <dbReference type="Rhea" id="RHEA-COMP:13180"/>
        <dbReference type="Rhea" id="RHEA-COMP:16897"/>
        <dbReference type="Rhea" id="RHEA-COMP:17067"/>
        <dbReference type="ChEBI" id="CHEBI:15378"/>
        <dbReference type="ChEBI" id="CHEBI:136412"/>
        <dbReference type="ChEBI" id="CHEBI:157695"/>
        <dbReference type="ChEBI" id="CHEBI:167181"/>
        <dbReference type="EC" id="4.2.99.18"/>
    </reaction>
</comment>
<comment type="cofactor">
    <cofactor evidence="1">
        <name>Zn(2+)</name>
        <dbReference type="ChEBI" id="CHEBI:29105"/>
    </cofactor>
    <text evidence="1">Binds 1 zinc ion per subunit.</text>
</comment>
<comment type="similarity">
    <text evidence="1">Belongs to the FPG family.</text>
</comment>
<feature type="initiator methionine" description="Removed" evidence="1">
    <location>
        <position position="1"/>
    </location>
</feature>
<feature type="chain" id="PRO_1000139936" description="Endonuclease 8">
    <location>
        <begin position="2"/>
        <end position="263"/>
    </location>
</feature>
<feature type="zinc finger region" description="FPG-type" evidence="1">
    <location>
        <begin position="229"/>
        <end position="263"/>
    </location>
</feature>
<feature type="active site" description="Schiff-base intermediate with DNA" evidence="1">
    <location>
        <position position="2"/>
    </location>
</feature>
<feature type="active site" description="Proton donor" evidence="1">
    <location>
        <position position="3"/>
    </location>
</feature>
<feature type="active site" description="Proton donor; for beta-elimination activity" evidence="1">
    <location>
        <position position="53"/>
    </location>
</feature>
<feature type="active site" description="Proton donor; for delta-elimination activity" evidence="1">
    <location>
        <position position="253"/>
    </location>
</feature>
<feature type="binding site" evidence="1">
    <location>
        <position position="70"/>
    </location>
    <ligand>
        <name>DNA</name>
        <dbReference type="ChEBI" id="CHEBI:16991"/>
    </ligand>
</feature>
<feature type="binding site" evidence="1">
    <location>
        <position position="125"/>
    </location>
    <ligand>
        <name>DNA</name>
        <dbReference type="ChEBI" id="CHEBI:16991"/>
    </ligand>
</feature>
<feature type="binding site" evidence="1">
    <location>
        <position position="169"/>
    </location>
    <ligand>
        <name>DNA</name>
        <dbReference type="ChEBI" id="CHEBI:16991"/>
    </ligand>
</feature>
<accession>B6I7Y5</accession>
<proteinExistence type="inferred from homology"/>
<gene>
    <name evidence="1" type="primary">nei</name>
    <name type="ordered locus">ECSE_0773</name>
</gene>
<evidence type="ECO:0000255" key="1">
    <source>
        <dbReference type="HAMAP-Rule" id="MF_01253"/>
    </source>
</evidence>
<keyword id="KW-0227">DNA damage</keyword>
<keyword id="KW-0234">DNA repair</keyword>
<keyword id="KW-0238">DNA-binding</keyword>
<keyword id="KW-0326">Glycosidase</keyword>
<keyword id="KW-0378">Hydrolase</keyword>
<keyword id="KW-0456">Lyase</keyword>
<keyword id="KW-0479">Metal-binding</keyword>
<keyword id="KW-0511">Multifunctional enzyme</keyword>
<keyword id="KW-0862">Zinc</keyword>
<keyword id="KW-0863">Zinc-finger</keyword>